<accession>B7NS05</accession>
<feature type="chain" id="PRO_1000123077" description="Glycerol-3-phosphate acyltransferase">
    <location>
        <begin position="1"/>
        <end position="807"/>
    </location>
</feature>
<feature type="short sequence motif" description="HXXXXD motif">
    <location>
        <begin position="305"/>
        <end position="310"/>
    </location>
</feature>
<reference key="1">
    <citation type="journal article" date="2009" name="PLoS Genet.">
        <title>Organised genome dynamics in the Escherichia coli species results in highly diverse adaptive paths.</title>
        <authorList>
            <person name="Touchon M."/>
            <person name="Hoede C."/>
            <person name="Tenaillon O."/>
            <person name="Barbe V."/>
            <person name="Baeriswyl S."/>
            <person name="Bidet P."/>
            <person name="Bingen E."/>
            <person name="Bonacorsi S."/>
            <person name="Bouchier C."/>
            <person name="Bouvet O."/>
            <person name="Calteau A."/>
            <person name="Chiapello H."/>
            <person name="Clermont O."/>
            <person name="Cruveiller S."/>
            <person name="Danchin A."/>
            <person name="Diard M."/>
            <person name="Dossat C."/>
            <person name="Karoui M.E."/>
            <person name="Frapy E."/>
            <person name="Garry L."/>
            <person name="Ghigo J.M."/>
            <person name="Gilles A.M."/>
            <person name="Johnson J."/>
            <person name="Le Bouguenec C."/>
            <person name="Lescat M."/>
            <person name="Mangenot S."/>
            <person name="Martinez-Jehanne V."/>
            <person name="Matic I."/>
            <person name="Nassif X."/>
            <person name="Oztas S."/>
            <person name="Petit M.A."/>
            <person name="Pichon C."/>
            <person name="Rouy Z."/>
            <person name="Ruf C.S."/>
            <person name="Schneider D."/>
            <person name="Tourret J."/>
            <person name="Vacherie B."/>
            <person name="Vallenet D."/>
            <person name="Medigue C."/>
            <person name="Rocha E.P.C."/>
            <person name="Denamur E."/>
        </authorList>
    </citation>
    <scope>NUCLEOTIDE SEQUENCE [LARGE SCALE GENOMIC DNA]</scope>
    <source>
        <strain>IAI39 / ExPEC</strain>
    </source>
</reference>
<evidence type="ECO:0000255" key="1">
    <source>
        <dbReference type="HAMAP-Rule" id="MF_00393"/>
    </source>
</evidence>
<proteinExistence type="inferred from homology"/>
<comment type="catalytic activity">
    <reaction evidence="1">
        <text>sn-glycerol 3-phosphate + an acyl-CoA = a 1-acyl-sn-glycero-3-phosphate + CoA</text>
        <dbReference type="Rhea" id="RHEA:15325"/>
        <dbReference type="ChEBI" id="CHEBI:57287"/>
        <dbReference type="ChEBI" id="CHEBI:57597"/>
        <dbReference type="ChEBI" id="CHEBI:57970"/>
        <dbReference type="ChEBI" id="CHEBI:58342"/>
        <dbReference type="EC" id="2.3.1.15"/>
    </reaction>
</comment>
<comment type="pathway">
    <text evidence="1">Phospholipid metabolism; CDP-diacylglycerol biosynthesis; CDP-diacylglycerol from sn-glycerol 3-phosphate: step 1/3.</text>
</comment>
<comment type="subcellular location">
    <subcellularLocation>
        <location evidence="1">Cell inner membrane</location>
        <topology evidence="1">Peripheral membrane protein</topology>
        <orientation evidence="1">Cytoplasmic side</orientation>
    </subcellularLocation>
</comment>
<comment type="domain">
    <text evidence="1">The HXXXXD motif is essential for acyltransferase activity and may constitute the binding site for the phosphate moiety of the glycerol-3-phosphate.</text>
</comment>
<comment type="similarity">
    <text evidence="1">Belongs to the GPAT/DAPAT family.</text>
</comment>
<name>PLSB_ECO7I</name>
<organism>
    <name type="scientific">Escherichia coli O7:K1 (strain IAI39 / ExPEC)</name>
    <dbReference type="NCBI Taxonomy" id="585057"/>
    <lineage>
        <taxon>Bacteria</taxon>
        <taxon>Pseudomonadati</taxon>
        <taxon>Pseudomonadota</taxon>
        <taxon>Gammaproteobacteria</taxon>
        <taxon>Enterobacterales</taxon>
        <taxon>Enterobacteriaceae</taxon>
        <taxon>Escherichia</taxon>
    </lineage>
</organism>
<gene>
    <name evidence="1" type="primary">plsB</name>
    <name type="ordered locus">ECIAI39_4462</name>
</gene>
<keyword id="KW-0012">Acyltransferase</keyword>
<keyword id="KW-0997">Cell inner membrane</keyword>
<keyword id="KW-1003">Cell membrane</keyword>
<keyword id="KW-0444">Lipid biosynthesis</keyword>
<keyword id="KW-0443">Lipid metabolism</keyword>
<keyword id="KW-0472">Membrane</keyword>
<keyword id="KW-0594">Phospholipid biosynthesis</keyword>
<keyword id="KW-1208">Phospholipid metabolism</keyword>
<keyword id="KW-0808">Transferase</keyword>
<sequence length="807" mass="91381">MSGWPRIYYKLLNLPLSILVKSKSIPADPAPELGLDTSRPIMYVLPYNSKADLLTLRAQCLAHDLPDPLEPLEIDGTLLPRYVFIHGGPRVFTYYTPKEESIKLFHDYLDLHRSNPNLDVQMVPVSVMFGRAPGREKGEVNPPLRMLNGVQKFFAVLWLGRDSFVRFSPSVSLRRMADEHGTDKTIAQKLARVARMHFARQRLAAVGPRLPARQDLFNKLLASRAIAKAVEDEARSKKISHEKAQQNAIALMEEIAANFSYEMIRLTDRILGFTWNRLYQGINVHNAERVRQLAHDGHELVYVPCHRSHMDYLLLSYVLYHQGLVPPHIAAGINLNFWPAGPIFRRLGAFFIRRTFKGNKLYSTVFREYLGELFSRGYSVEYFVEGGRSRTGRLLDPKTGTLSMTIQAMLRGGTRPITLIPIYIGYEHVMEVGTYAKELRGATKEKESLPQMLRGLSKLRNLGQGYVNFGEPMPLMTYLNQHVPDWRESIDPIEAVRPAWLTPTVNNIAADLMVRINNAGAANAMNLCCTALLASRQRSLTREQLTEQLNCYLDLMRNVPYSTDSTVPSASASELIDHALQMNKFEVEKDTIGDIIILPREQAVLMTYYRNNIAHMLVLPSLMAAIVTQHRHISRDVLMEHVNVLYPMLKAELFLRWDRDELPDVIDALANEMQRQGLITLQDDELHINPAHSRTLQLLAAGARETLQRYAITFWLLSANPSINRGTLEKESRTVAQRLSVLHGINAPEFFDKAVFSSLVLTLRDEGYISDSGDAEPAETMKVYQLLAELITSDVRLTIESATQGEG</sequence>
<protein>
    <recommendedName>
        <fullName evidence="1">Glycerol-3-phosphate acyltransferase</fullName>
        <shortName evidence="1">GPAT</shortName>
        <ecNumber evidence="1">2.3.1.15</ecNumber>
    </recommendedName>
</protein>
<dbReference type="EC" id="2.3.1.15" evidence="1"/>
<dbReference type="EMBL" id="CU928164">
    <property type="protein sequence ID" value="CAR20568.1"/>
    <property type="molecule type" value="Genomic_DNA"/>
</dbReference>
<dbReference type="RefSeq" id="WP_000017354.1">
    <property type="nucleotide sequence ID" value="NC_011750.1"/>
</dbReference>
<dbReference type="RefSeq" id="YP_002410335.1">
    <property type="nucleotide sequence ID" value="NC_011750.1"/>
</dbReference>
<dbReference type="SMR" id="B7NS05"/>
<dbReference type="STRING" id="585057.ECIAI39_4462"/>
<dbReference type="GeneID" id="75204185"/>
<dbReference type="KEGG" id="ect:ECIAI39_4462"/>
<dbReference type="PATRIC" id="fig|585057.6.peg.4608"/>
<dbReference type="HOGENOM" id="CLU_015407_0_0_6"/>
<dbReference type="UniPathway" id="UPA00557">
    <property type="reaction ID" value="UER00612"/>
</dbReference>
<dbReference type="Proteomes" id="UP000000749">
    <property type="component" value="Chromosome"/>
</dbReference>
<dbReference type="GO" id="GO:0005886">
    <property type="term" value="C:plasma membrane"/>
    <property type="evidence" value="ECO:0007669"/>
    <property type="project" value="UniProtKB-SubCell"/>
</dbReference>
<dbReference type="GO" id="GO:0004366">
    <property type="term" value="F:glycerol-3-phosphate O-acyltransferase activity"/>
    <property type="evidence" value="ECO:0007669"/>
    <property type="project" value="UniProtKB-UniRule"/>
</dbReference>
<dbReference type="GO" id="GO:0016024">
    <property type="term" value="P:CDP-diacylglycerol biosynthetic process"/>
    <property type="evidence" value="ECO:0007669"/>
    <property type="project" value="UniProtKB-UniRule"/>
</dbReference>
<dbReference type="GO" id="GO:0006631">
    <property type="term" value="P:fatty acid metabolic process"/>
    <property type="evidence" value="ECO:0007669"/>
    <property type="project" value="TreeGrafter"/>
</dbReference>
<dbReference type="CDD" id="cd07993">
    <property type="entry name" value="LPLAT_DHAPAT-like"/>
    <property type="match status" value="1"/>
</dbReference>
<dbReference type="HAMAP" id="MF_00393">
    <property type="entry name" value="Glyc3P_acyltrans"/>
    <property type="match status" value="1"/>
</dbReference>
<dbReference type="InterPro" id="IPR022284">
    <property type="entry name" value="GPAT/DHAPAT"/>
</dbReference>
<dbReference type="InterPro" id="IPR045520">
    <property type="entry name" value="GPAT/DHAPAT_C"/>
</dbReference>
<dbReference type="InterPro" id="IPR041728">
    <property type="entry name" value="GPAT/DHAPAT_LPLAT"/>
</dbReference>
<dbReference type="InterPro" id="IPR028354">
    <property type="entry name" value="GPAT_PlsB"/>
</dbReference>
<dbReference type="InterPro" id="IPR002123">
    <property type="entry name" value="Plipid/glycerol_acylTrfase"/>
</dbReference>
<dbReference type="NCBIfam" id="TIGR03703">
    <property type="entry name" value="plsB"/>
    <property type="match status" value="1"/>
</dbReference>
<dbReference type="NCBIfam" id="NF003441">
    <property type="entry name" value="PRK04974.1"/>
    <property type="match status" value="1"/>
</dbReference>
<dbReference type="PANTHER" id="PTHR12563:SF17">
    <property type="entry name" value="DIHYDROXYACETONE PHOSPHATE ACYLTRANSFERASE"/>
    <property type="match status" value="1"/>
</dbReference>
<dbReference type="PANTHER" id="PTHR12563">
    <property type="entry name" value="GLYCEROL-3-PHOSPHATE ACYLTRANSFERASE"/>
    <property type="match status" value="1"/>
</dbReference>
<dbReference type="Pfam" id="PF01553">
    <property type="entry name" value="Acyltransferase"/>
    <property type="match status" value="1"/>
</dbReference>
<dbReference type="Pfam" id="PF19277">
    <property type="entry name" value="GPAT_C"/>
    <property type="match status" value="1"/>
</dbReference>
<dbReference type="PIRSF" id="PIRSF500064">
    <property type="entry name" value="GPAT"/>
    <property type="match status" value="1"/>
</dbReference>
<dbReference type="PIRSF" id="PIRSF000437">
    <property type="entry name" value="GPAT_DHAPAT"/>
    <property type="match status" value="1"/>
</dbReference>
<dbReference type="SMART" id="SM00563">
    <property type="entry name" value="PlsC"/>
    <property type="match status" value="1"/>
</dbReference>
<dbReference type="SUPFAM" id="SSF69593">
    <property type="entry name" value="Glycerol-3-phosphate (1)-acyltransferase"/>
    <property type="match status" value="1"/>
</dbReference>